<accession>B5Z2H0</accession>
<dbReference type="EC" id="3.6.1.-" evidence="1"/>
<dbReference type="EMBL" id="CP001164">
    <property type="protein sequence ID" value="ACI38051.1"/>
    <property type="molecule type" value="Genomic_DNA"/>
</dbReference>
<dbReference type="RefSeq" id="WP_000041970.1">
    <property type="nucleotide sequence ID" value="NC_011353.1"/>
</dbReference>
<dbReference type="SMR" id="B5Z2H0"/>
<dbReference type="GeneID" id="93777661"/>
<dbReference type="KEGG" id="ecf:ECH74115_5677"/>
<dbReference type="HOGENOM" id="CLU_033617_2_0_6"/>
<dbReference type="GO" id="GO:0005737">
    <property type="term" value="C:cytoplasm"/>
    <property type="evidence" value="ECO:0007669"/>
    <property type="project" value="UniProtKB-SubCell"/>
</dbReference>
<dbReference type="GO" id="GO:0005525">
    <property type="term" value="F:GTP binding"/>
    <property type="evidence" value="ECO:0007669"/>
    <property type="project" value="UniProtKB-UniRule"/>
</dbReference>
<dbReference type="GO" id="GO:0003924">
    <property type="term" value="F:GTPase activity"/>
    <property type="evidence" value="ECO:0007669"/>
    <property type="project" value="UniProtKB-UniRule"/>
</dbReference>
<dbReference type="GO" id="GO:0046872">
    <property type="term" value="F:metal ion binding"/>
    <property type="evidence" value="ECO:0007669"/>
    <property type="project" value="UniProtKB-KW"/>
</dbReference>
<dbReference type="GO" id="GO:0019843">
    <property type="term" value="F:rRNA binding"/>
    <property type="evidence" value="ECO:0007669"/>
    <property type="project" value="UniProtKB-KW"/>
</dbReference>
<dbReference type="GO" id="GO:0042274">
    <property type="term" value="P:ribosomal small subunit biogenesis"/>
    <property type="evidence" value="ECO:0007669"/>
    <property type="project" value="UniProtKB-UniRule"/>
</dbReference>
<dbReference type="CDD" id="cd01854">
    <property type="entry name" value="YjeQ_EngC"/>
    <property type="match status" value="1"/>
</dbReference>
<dbReference type="FunFam" id="1.10.40.50:FF:000001">
    <property type="entry name" value="Small ribosomal subunit biogenesis GTPase RsgA"/>
    <property type="match status" value="1"/>
</dbReference>
<dbReference type="FunFam" id="2.40.50.140:FF:000122">
    <property type="entry name" value="Small ribosomal subunit biogenesis GTPase RsgA"/>
    <property type="match status" value="1"/>
</dbReference>
<dbReference type="FunFam" id="3.40.50.300:FF:000389">
    <property type="entry name" value="Small ribosomal subunit biogenesis GTPase RsgA"/>
    <property type="match status" value="1"/>
</dbReference>
<dbReference type="Gene3D" id="2.40.50.140">
    <property type="entry name" value="Nucleic acid-binding proteins"/>
    <property type="match status" value="1"/>
</dbReference>
<dbReference type="Gene3D" id="3.40.50.300">
    <property type="entry name" value="P-loop containing nucleotide triphosphate hydrolases"/>
    <property type="match status" value="1"/>
</dbReference>
<dbReference type="Gene3D" id="1.10.40.50">
    <property type="entry name" value="Probable gtpase engc, domain 3"/>
    <property type="match status" value="1"/>
</dbReference>
<dbReference type="HAMAP" id="MF_01820">
    <property type="entry name" value="GTPase_RsgA"/>
    <property type="match status" value="1"/>
</dbReference>
<dbReference type="InterPro" id="IPR030378">
    <property type="entry name" value="G_CP_dom"/>
</dbReference>
<dbReference type="InterPro" id="IPR012340">
    <property type="entry name" value="NA-bd_OB-fold"/>
</dbReference>
<dbReference type="InterPro" id="IPR027417">
    <property type="entry name" value="P-loop_NTPase"/>
</dbReference>
<dbReference type="InterPro" id="IPR004881">
    <property type="entry name" value="Ribosome_biogen_GTPase_RsgA"/>
</dbReference>
<dbReference type="InterPro" id="IPR010914">
    <property type="entry name" value="RsgA_GTPase_dom"/>
</dbReference>
<dbReference type="NCBIfam" id="NF008931">
    <property type="entry name" value="PRK12288.1"/>
    <property type="match status" value="1"/>
</dbReference>
<dbReference type="NCBIfam" id="TIGR00157">
    <property type="entry name" value="ribosome small subunit-dependent GTPase A"/>
    <property type="match status" value="1"/>
</dbReference>
<dbReference type="PANTHER" id="PTHR32120">
    <property type="entry name" value="SMALL RIBOSOMAL SUBUNIT BIOGENESIS GTPASE RSGA"/>
    <property type="match status" value="1"/>
</dbReference>
<dbReference type="PANTHER" id="PTHR32120:SF11">
    <property type="entry name" value="SMALL RIBOSOMAL SUBUNIT BIOGENESIS GTPASE RSGA 1, MITOCHONDRIAL-RELATED"/>
    <property type="match status" value="1"/>
</dbReference>
<dbReference type="Pfam" id="PF03193">
    <property type="entry name" value="RsgA_GTPase"/>
    <property type="match status" value="1"/>
</dbReference>
<dbReference type="SUPFAM" id="SSF52540">
    <property type="entry name" value="P-loop containing nucleoside triphosphate hydrolases"/>
    <property type="match status" value="1"/>
</dbReference>
<dbReference type="PROSITE" id="PS50936">
    <property type="entry name" value="ENGC_GTPASE"/>
    <property type="match status" value="1"/>
</dbReference>
<dbReference type="PROSITE" id="PS51721">
    <property type="entry name" value="G_CP"/>
    <property type="match status" value="1"/>
</dbReference>
<protein>
    <recommendedName>
        <fullName evidence="1">Small ribosomal subunit biogenesis GTPase RsgA</fullName>
        <ecNumber evidence="1">3.6.1.-</ecNumber>
    </recommendedName>
</protein>
<feature type="chain" id="PRO_1000188065" description="Small ribosomal subunit biogenesis GTPase RsgA">
    <location>
        <begin position="1"/>
        <end position="350"/>
    </location>
</feature>
<feature type="domain" description="CP-type G" evidence="2">
    <location>
        <begin position="104"/>
        <end position="273"/>
    </location>
</feature>
<feature type="region of interest" description="Disordered" evidence="3">
    <location>
        <begin position="1"/>
        <end position="33"/>
    </location>
</feature>
<feature type="compositionally biased region" description="Polar residues" evidence="3">
    <location>
        <begin position="1"/>
        <end position="17"/>
    </location>
</feature>
<feature type="binding site" evidence="1">
    <location>
        <begin position="160"/>
        <end position="163"/>
    </location>
    <ligand>
        <name>GTP</name>
        <dbReference type="ChEBI" id="CHEBI:37565"/>
    </ligand>
</feature>
<feature type="binding site" evidence="1">
    <location>
        <begin position="214"/>
        <end position="222"/>
    </location>
    <ligand>
        <name>GTP</name>
        <dbReference type="ChEBI" id="CHEBI:37565"/>
    </ligand>
</feature>
<feature type="binding site" evidence="1">
    <location>
        <position position="297"/>
    </location>
    <ligand>
        <name>Zn(2+)</name>
        <dbReference type="ChEBI" id="CHEBI:29105"/>
    </ligand>
</feature>
<feature type="binding site" evidence="1">
    <location>
        <position position="302"/>
    </location>
    <ligand>
        <name>Zn(2+)</name>
        <dbReference type="ChEBI" id="CHEBI:29105"/>
    </ligand>
</feature>
<feature type="binding site" evidence="1">
    <location>
        <position position="304"/>
    </location>
    <ligand>
        <name>Zn(2+)</name>
        <dbReference type="ChEBI" id="CHEBI:29105"/>
    </ligand>
</feature>
<feature type="binding site" evidence="1">
    <location>
        <position position="310"/>
    </location>
    <ligand>
        <name>Zn(2+)</name>
        <dbReference type="ChEBI" id="CHEBI:29105"/>
    </ligand>
</feature>
<name>RSGA_ECO5E</name>
<evidence type="ECO:0000255" key="1">
    <source>
        <dbReference type="HAMAP-Rule" id="MF_01820"/>
    </source>
</evidence>
<evidence type="ECO:0000255" key="2">
    <source>
        <dbReference type="PROSITE-ProRule" id="PRU01058"/>
    </source>
</evidence>
<evidence type="ECO:0000256" key="3">
    <source>
        <dbReference type="SAM" id="MobiDB-lite"/>
    </source>
</evidence>
<keyword id="KW-0963">Cytoplasm</keyword>
<keyword id="KW-0342">GTP-binding</keyword>
<keyword id="KW-0378">Hydrolase</keyword>
<keyword id="KW-0479">Metal-binding</keyword>
<keyword id="KW-0547">Nucleotide-binding</keyword>
<keyword id="KW-0690">Ribosome biogenesis</keyword>
<keyword id="KW-0694">RNA-binding</keyword>
<keyword id="KW-0699">rRNA-binding</keyword>
<keyword id="KW-0862">Zinc</keyword>
<gene>
    <name evidence="1" type="primary">rsgA</name>
    <name type="ordered locus">ECH74115_5677</name>
</gene>
<sequence>MSKNKLSKGQQRRVNANHQRRLKTSKEKPDYDDNLFGEPDEGIVISRFGMHADVESADGDVHRCNIRRTIRSLVTGDRVVWRPGKPAAEGVNVKGIVEAVHERTSVLTRPDFYDGVKPIAANIDQIVIVSAILPELSLNIIDRYLVACETLQIEPIIVLNKIDLLDDEGMAFVNEQMDIYRNIGYRVLMVSSHTQDGLKPLEEALTGRISIFAGQSGVGKSSLLNALLGLQKEILTNDVSDNSGLGQHTTTAARLYHFPHGGDVIDSPGVREFGLWHLEPEQITQGFVEFHDYLGLCKYRDCKHDTDPGCAIREAVEEGKIAETRFENYHRILESMAQVKTRKNFSDTDD</sequence>
<organism>
    <name type="scientific">Escherichia coli O157:H7 (strain EC4115 / EHEC)</name>
    <dbReference type="NCBI Taxonomy" id="444450"/>
    <lineage>
        <taxon>Bacteria</taxon>
        <taxon>Pseudomonadati</taxon>
        <taxon>Pseudomonadota</taxon>
        <taxon>Gammaproteobacteria</taxon>
        <taxon>Enterobacterales</taxon>
        <taxon>Enterobacteriaceae</taxon>
        <taxon>Escherichia</taxon>
    </lineage>
</organism>
<comment type="function">
    <text evidence="1">One of several proteins that assist in the late maturation steps of the functional core of the 30S ribosomal subunit. Helps release RbfA from mature subunits. May play a role in the assembly of ribosomal proteins into the subunit. Circularly permuted GTPase that catalyzes slow GTP hydrolysis, GTPase activity is stimulated by the 30S ribosomal subunit.</text>
</comment>
<comment type="cofactor">
    <cofactor evidence="1">
        <name>Zn(2+)</name>
        <dbReference type="ChEBI" id="CHEBI:29105"/>
    </cofactor>
    <text evidence="1">Binds 1 zinc ion per subunit.</text>
</comment>
<comment type="subunit">
    <text evidence="1">Monomer. Associates with 30S ribosomal subunit, binds 16S rRNA.</text>
</comment>
<comment type="subcellular location">
    <subcellularLocation>
        <location evidence="1">Cytoplasm</location>
    </subcellularLocation>
</comment>
<comment type="similarity">
    <text evidence="1">Belongs to the TRAFAC class YlqF/YawG GTPase family. RsgA subfamily.</text>
</comment>
<reference key="1">
    <citation type="journal article" date="2011" name="Proc. Natl. Acad. Sci. U.S.A.">
        <title>Genomic anatomy of Escherichia coli O157:H7 outbreaks.</title>
        <authorList>
            <person name="Eppinger M."/>
            <person name="Mammel M.K."/>
            <person name="Leclerc J.E."/>
            <person name="Ravel J."/>
            <person name="Cebula T.A."/>
        </authorList>
    </citation>
    <scope>NUCLEOTIDE SEQUENCE [LARGE SCALE GENOMIC DNA]</scope>
    <source>
        <strain>EC4115 / EHEC</strain>
    </source>
</reference>
<proteinExistence type="inferred from homology"/>